<comment type="function">
    <text evidence="1">Cell wall formation. Adds enolpyruvyl to UDP-N-acetylglucosamine.</text>
</comment>
<comment type="catalytic activity">
    <reaction evidence="1">
        <text>phosphoenolpyruvate + UDP-N-acetyl-alpha-D-glucosamine = UDP-N-acetyl-3-O-(1-carboxyvinyl)-alpha-D-glucosamine + phosphate</text>
        <dbReference type="Rhea" id="RHEA:18681"/>
        <dbReference type="ChEBI" id="CHEBI:43474"/>
        <dbReference type="ChEBI" id="CHEBI:57705"/>
        <dbReference type="ChEBI" id="CHEBI:58702"/>
        <dbReference type="ChEBI" id="CHEBI:68483"/>
        <dbReference type="EC" id="2.5.1.7"/>
    </reaction>
</comment>
<comment type="pathway">
    <text evidence="1">Cell wall biogenesis; peptidoglycan biosynthesis.</text>
</comment>
<comment type="subcellular location">
    <subcellularLocation>
        <location evidence="1">Cytoplasm</location>
    </subcellularLocation>
</comment>
<comment type="similarity">
    <text evidence="1">Belongs to the EPSP synthase family. MurA subfamily.</text>
</comment>
<gene>
    <name evidence="1" type="primary">murA</name>
    <name type="synonym">ttg2G</name>
</gene>
<protein>
    <recommendedName>
        <fullName evidence="1">UDP-N-acetylglucosamine 1-carboxyvinyltransferase</fullName>
        <ecNumber evidence="1">2.5.1.7</ecNumber>
    </recommendedName>
    <alternativeName>
        <fullName evidence="1">Enoylpyruvate transferase</fullName>
    </alternativeName>
    <alternativeName>
        <fullName evidence="1">UDP-N-acetylglucosamine enolpyruvyl transferase</fullName>
        <shortName evidence="1">EPT</shortName>
    </alternativeName>
</protein>
<sequence length="419" mass="44742">MDKLIITGGACLDGEIRISGAKNAALPILAATLLADGPVTVGNLPHLHDITTMIELFGRMGIEPVIDEKLAVEIDPRTIKTLVAPYELVKTMRASILVLGPMVARFGEAEVALPGGCAIGSRPVDLHIRGLEAMGAKIEVQGGYIKAKAPEGGLRGAHFFFDTVSVTGTENIMMAAALAKGRSVLQNAAREPEVVDLANFINAMGGKVQGAGTDTIVIDGVERLHSANYRVMPDRIETGTYLVAAAVTGGRVKVKDTDPTILEAVLEKLKEAGADINTGEDWIELDMHGKRPKAVNLRTAPYPAFPTDMQAQFISLNAIAEGTGAVIETIFENRFMHVYEMHRMGAQIQVEGNTAIVTGVKALKVPGNGHLRASASLVLSALVAEGDTLIDRIYHIDRGYECIEEKLQMLGAKIRRVPG</sequence>
<proteinExistence type="inferred from homology"/>
<feature type="chain" id="PRO_0000178902" description="UDP-N-acetylglucosamine 1-carboxyvinyltransferase">
    <location>
        <begin position="1"/>
        <end position="419"/>
    </location>
</feature>
<feature type="active site" description="Proton donor" evidence="1">
    <location>
        <position position="117"/>
    </location>
</feature>
<feature type="binding site" evidence="1">
    <location>
        <begin position="22"/>
        <end position="23"/>
    </location>
    <ligand>
        <name>phosphoenolpyruvate</name>
        <dbReference type="ChEBI" id="CHEBI:58702"/>
    </ligand>
</feature>
<feature type="binding site" evidence="1">
    <location>
        <position position="93"/>
    </location>
    <ligand>
        <name>UDP-N-acetyl-alpha-D-glucosamine</name>
        <dbReference type="ChEBI" id="CHEBI:57705"/>
    </ligand>
</feature>
<feature type="binding site" evidence="1">
    <location>
        <begin position="122"/>
        <end position="126"/>
    </location>
    <ligand>
        <name>UDP-N-acetyl-alpha-D-glucosamine</name>
        <dbReference type="ChEBI" id="CHEBI:57705"/>
    </ligand>
</feature>
<feature type="binding site" evidence="1">
    <location>
        <position position="308"/>
    </location>
    <ligand>
        <name>UDP-N-acetyl-alpha-D-glucosamine</name>
        <dbReference type="ChEBI" id="CHEBI:57705"/>
    </ligand>
</feature>
<feature type="binding site" evidence="1">
    <location>
        <position position="330"/>
    </location>
    <ligand>
        <name>UDP-N-acetyl-alpha-D-glucosamine</name>
        <dbReference type="ChEBI" id="CHEBI:57705"/>
    </ligand>
</feature>
<feature type="modified residue" description="2-(S-cysteinyl)pyruvic acid O-phosphothioketal" evidence="1">
    <location>
        <position position="117"/>
    </location>
</feature>
<keyword id="KW-0131">Cell cycle</keyword>
<keyword id="KW-0132">Cell division</keyword>
<keyword id="KW-0133">Cell shape</keyword>
<keyword id="KW-0961">Cell wall biogenesis/degradation</keyword>
<keyword id="KW-0963">Cytoplasm</keyword>
<keyword id="KW-0573">Peptidoglycan synthesis</keyword>
<keyword id="KW-0670">Pyruvate</keyword>
<keyword id="KW-0808">Transferase</keyword>
<accession>Q9Z3Z6</accession>
<reference key="1">
    <citation type="journal article" date="1998" name="J. Bacteriol.">
        <title>Isolation and characterization of toluene-sensitive mutants from the toluene-resistant bacterium Pseudomonas putida GM73.</title>
        <authorList>
            <person name="Kim K."/>
            <person name="Lee S."/>
            <person name="Lee K."/>
            <person name="Lim D."/>
        </authorList>
    </citation>
    <scope>NUCLEOTIDE SEQUENCE [GENOMIC DNA]</scope>
    <source>
        <strain>GM73</strain>
    </source>
</reference>
<evidence type="ECO:0000255" key="1">
    <source>
        <dbReference type="HAMAP-Rule" id="MF_00111"/>
    </source>
</evidence>
<name>MURA_PSEPU</name>
<organism>
    <name type="scientific">Pseudomonas putida</name>
    <name type="common">Arthrobacter siderocapsulatus</name>
    <dbReference type="NCBI Taxonomy" id="303"/>
    <lineage>
        <taxon>Bacteria</taxon>
        <taxon>Pseudomonadati</taxon>
        <taxon>Pseudomonadota</taxon>
        <taxon>Gammaproteobacteria</taxon>
        <taxon>Pseudomonadales</taxon>
        <taxon>Pseudomonadaceae</taxon>
        <taxon>Pseudomonas</taxon>
    </lineage>
</organism>
<dbReference type="EC" id="2.5.1.7" evidence="1"/>
<dbReference type="EMBL" id="AF106002">
    <property type="protein sequence ID" value="AAD17963.1"/>
    <property type="molecule type" value="Genomic_DNA"/>
</dbReference>
<dbReference type="SMR" id="Q9Z3Z6"/>
<dbReference type="eggNOG" id="COG0766">
    <property type="taxonomic scope" value="Bacteria"/>
</dbReference>
<dbReference type="UniPathway" id="UPA00219"/>
<dbReference type="GO" id="GO:0005737">
    <property type="term" value="C:cytoplasm"/>
    <property type="evidence" value="ECO:0007669"/>
    <property type="project" value="UniProtKB-SubCell"/>
</dbReference>
<dbReference type="GO" id="GO:0008760">
    <property type="term" value="F:UDP-N-acetylglucosamine 1-carboxyvinyltransferase activity"/>
    <property type="evidence" value="ECO:0007669"/>
    <property type="project" value="UniProtKB-UniRule"/>
</dbReference>
<dbReference type="GO" id="GO:0051301">
    <property type="term" value="P:cell division"/>
    <property type="evidence" value="ECO:0007669"/>
    <property type="project" value="UniProtKB-KW"/>
</dbReference>
<dbReference type="GO" id="GO:0071555">
    <property type="term" value="P:cell wall organization"/>
    <property type="evidence" value="ECO:0007669"/>
    <property type="project" value="UniProtKB-KW"/>
</dbReference>
<dbReference type="GO" id="GO:0009252">
    <property type="term" value="P:peptidoglycan biosynthetic process"/>
    <property type="evidence" value="ECO:0007669"/>
    <property type="project" value="UniProtKB-UniRule"/>
</dbReference>
<dbReference type="GO" id="GO:0008360">
    <property type="term" value="P:regulation of cell shape"/>
    <property type="evidence" value="ECO:0007669"/>
    <property type="project" value="UniProtKB-KW"/>
</dbReference>
<dbReference type="GO" id="GO:0019277">
    <property type="term" value="P:UDP-N-acetylgalactosamine biosynthetic process"/>
    <property type="evidence" value="ECO:0007669"/>
    <property type="project" value="InterPro"/>
</dbReference>
<dbReference type="CDD" id="cd01555">
    <property type="entry name" value="UdpNAET"/>
    <property type="match status" value="1"/>
</dbReference>
<dbReference type="FunFam" id="3.65.10.10:FF:000001">
    <property type="entry name" value="UDP-N-acetylglucosamine 1-carboxyvinyltransferase"/>
    <property type="match status" value="1"/>
</dbReference>
<dbReference type="Gene3D" id="3.65.10.10">
    <property type="entry name" value="Enolpyruvate transferase domain"/>
    <property type="match status" value="2"/>
</dbReference>
<dbReference type="HAMAP" id="MF_00111">
    <property type="entry name" value="MurA"/>
    <property type="match status" value="1"/>
</dbReference>
<dbReference type="InterPro" id="IPR001986">
    <property type="entry name" value="Enolpyruvate_Tfrase_dom"/>
</dbReference>
<dbReference type="InterPro" id="IPR036968">
    <property type="entry name" value="Enolpyruvate_Tfrase_sf"/>
</dbReference>
<dbReference type="InterPro" id="IPR050068">
    <property type="entry name" value="MurA_subfamily"/>
</dbReference>
<dbReference type="InterPro" id="IPR013792">
    <property type="entry name" value="RNA3'P_cycl/enolpyr_Trfase_a/b"/>
</dbReference>
<dbReference type="InterPro" id="IPR005750">
    <property type="entry name" value="UDP_GlcNAc_COvinyl_MurA"/>
</dbReference>
<dbReference type="NCBIfam" id="TIGR01072">
    <property type="entry name" value="murA"/>
    <property type="match status" value="1"/>
</dbReference>
<dbReference type="NCBIfam" id="NF006873">
    <property type="entry name" value="PRK09369.1"/>
    <property type="match status" value="1"/>
</dbReference>
<dbReference type="PANTHER" id="PTHR43783">
    <property type="entry name" value="UDP-N-ACETYLGLUCOSAMINE 1-CARBOXYVINYLTRANSFERASE"/>
    <property type="match status" value="1"/>
</dbReference>
<dbReference type="PANTHER" id="PTHR43783:SF1">
    <property type="entry name" value="UDP-N-ACETYLGLUCOSAMINE 1-CARBOXYVINYLTRANSFERASE"/>
    <property type="match status" value="1"/>
</dbReference>
<dbReference type="Pfam" id="PF00275">
    <property type="entry name" value="EPSP_synthase"/>
    <property type="match status" value="1"/>
</dbReference>
<dbReference type="SUPFAM" id="SSF55205">
    <property type="entry name" value="EPT/RTPC-like"/>
    <property type="match status" value="1"/>
</dbReference>